<protein>
    <recommendedName>
        <fullName evidence="1">DNA protection during starvation protein</fullName>
        <ecNumber evidence="1">1.16.-.-</ecNumber>
    </recommendedName>
</protein>
<evidence type="ECO:0000255" key="1">
    <source>
        <dbReference type="HAMAP-Rule" id="MF_01441"/>
    </source>
</evidence>
<organism>
    <name type="scientific">Yersinia pseudotuberculosis serotype O:1b (strain IP 31758)</name>
    <dbReference type="NCBI Taxonomy" id="349747"/>
    <lineage>
        <taxon>Bacteria</taxon>
        <taxon>Pseudomonadati</taxon>
        <taxon>Pseudomonadota</taxon>
        <taxon>Gammaproteobacteria</taxon>
        <taxon>Enterobacterales</taxon>
        <taxon>Yersiniaceae</taxon>
        <taxon>Yersinia</taxon>
    </lineage>
</organism>
<keyword id="KW-0963">Cytoplasm</keyword>
<keyword id="KW-0226">DNA condensation</keyword>
<keyword id="KW-0238">DNA-binding</keyword>
<keyword id="KW-0408">Iron</keyword>
<keyword id="KW-0409">Iron storage</keyword>
<keyword id="KW-0479">Metal-binding</keyword>
<keyword id="KW-0560">Oxidoreductase</keyword>
<comment type="function">
    <text evidence="1">During stationary phase, binds the chromosome non-specifically, forming a highly ordered and stable dps-DNA co-crystal within which chromosomal DNA is condensed and protected from diverse damages. It protects DNA from oxidative damage by sequestering intracellular Fe(2+) ion and storing it in the form of Fe(3+) oxyhydroxide mineral, which can be released after reduction. One hydrogen peroxide oxidizes two Fe(2+) ions, which prevents hydroxyl radical production by the Fenton reaction.</text>
</comment>
<comment type="catalytic activity">
    <reaction evidence="1">
        <text>2 Fe(2+) + H2O2 + 2 H(+) = 2 Fe(3+) + 2 H2O</text>
        <dbReference type="Rhea" id="RHEA:48712"/>
        <dbReference type="ChEBI" id="CHEBI:15377"/>
        <dbReference type="ChEBI" id="CHEBI:15378"/>
        <dbReference type="ChEBI" id="CHEBI:16240"/>
        <dbReference type="ChEBI" id="CHEBI:29033"/>
        <dbReference type="ChEBI" id="CHEBI:29034"/>
    </reaction>
</comment>
<comment type="subunit">
    <text evidence="1">Homododecamer. The 12 subunits form a hollow sphere into which the mineral iron core of up to 500 Fe(3+) can be deposited.</text>
</comment>
<comment type="subcellular location">
    <subcellularLocation>
        <location evidence="1">Cytoplasm</location>
    </subcellularLocation>
</comment>
<comment type="similarity">
    <text evidence="1">Belongs to the Dps family.</text>
</comment>
<sequence length="167" mass="18871">MSTAKLVKTKPSELLYTRNDVEEHVKVATIKRLNQMVIQFIDLSLITKQAHWNMRGANFVAVHEMLDGFRTALTDHLDTFAERAVQLGGVALGTAQVINDKTPLKSYPTNIHSVQEHLKALAERYAIVANDIRKAITEVEDENSADMFTAASRDLDKFLWFIESNIE</sequence>
<proteinExistence type="inferred from homology"/>
<accession>A7FGU7</accession>
<reference key="1">
    <citation type="journal article" date="2007" name="PLoS Genet.">
        <title>The complete genome sequence of Yersinia pseudotuberculosis IP31758, the causative agent of Far East scarlet-like fever.</title>
        <authorList>
            <person name="Eppinger M."/>
            <person name="Rosovitz M.J."/>
            <person name="Fricke W.F."/>
            <person name="Rasko D.A."/>
            <person name="Kokorina G."/>
            <person name="Fayolle C."/>
            <person name="Lindler L.E."/>
            <person name="Carniel E."/>
            <person name="Ravel J."/>
        </authorList>
    </citation>
    <scope>NUCLEOTIDE SEQUENCE [LARGE SCALE GENOMIC DNA]</scope>
    <source>
        <strain>IP 31758</strain>
    </source>
</reference>
<gene>
    <name evidence="1" type="primary">dps</name>
    <name type="ordered locus">YpsIP31758_1497</name>
</gene>
<name>DPS_YERP3</name>
<dbReference type="EC" id="1.16.-.-" evidence="1"/>
<dbReference type="EMBL" id="CP000720">
    <property type="protein sequence ID" value="ABS48710.1"/>
    <property type="molecule type" value="Genomic_DNA"/>
</dbReference>
<dbReference type="RefSeq" id="WP_002210233.1">
    <property type="nucleotide sequence ID" value="NC_009708.1"/>
</dbReference>
<dbReference type="SMR" id="A7FGU7"/>
<dbReference type="GeneID" id="57976175"/>
<dbReference type="KEGG" id="ypi:YpsIP31758_1497"/>
<dbReference type="HOGENOM" id="CLU_098183_1_2_6"/>
<dbReference type="Proteomes" id="UP000002412">
    <property type="component" value="Chromosome"/>
</dbReference>
<dbReference type="GO" id="GO:0005737">
    <property type="term" value="C:cytoplasm"/>
    <property type="evidence" value="ECO:0007669"/>
    <property type="project" value="UniProtKB-SubCell"/>
</dbReference>
<dbReference type="GO" id="GO:0003677">
    <property type="term" value="F:DNA binding"/>
    <property type="evidence" value="ECO:0007669"/>
    <property type="project" value="UniProtKB-UniRule"/>
</dbReference>
<dbReference type="GO" id="GO:0008199">
    <property type="term" value="F:ferric iron binding"/>
    <property type="evidence" value="ECO:0007669"/>
    <property type="project" value="UniProtKB-UniRule"/>
</dbReference>
<dbReference type="GO" id="GO:0016722">
    <property type="term" value="F:oxidoreductase activity, acting on metal ions"/>
    <property type="evidence" value="ECO:0007669"/>
    <property type="project" value="InterPro"/>
</dbReference>
<dbReference type="GO" id="GO:0030261">
    <property type="term" value="P:chromosome condensation"/>
    <property type="evidence" value="ECO:0007669"/>
    <property type="project" value="UniProtKB-KW"/>
</dbReference>
<dbReference type="GO" id="GO:0006879">
    <property type="term" value="P:intracellular iron ion homeostasis"/>
    <property type="evidence" value="ECO:0007669"/>
    <property type="project" value="UniProtKB-KW"/>
</dbReference>
<dbReference type="CDD" id="cd01043">
    <property type="entry name" value="DPS"/>
    <property type="match status" value="1"/>
</dbReference>
<dbReference type="Gene3D" id="1.20.1260.10">
    <property type="match status" value="1"/>
</dbReference>
<dbReference type="HAMAP" id="MF_01441">
    <property type="entry name" value="Dps"/>
    <property type="match status" value="1"/>
</dbReference>
<dbReference type="InterPro" id="IPR002177">
    <property type="entry name" value="DPS_DNA-bd"/>
</dbReference>
<dbReference type="InterPro" id="IPR023188">
    <property type="entry name" value="DPS_DNA-bd_CS"/>
</dbReference>
<dbReference type="InterPro" id="IPR023067">
    <property type="entry name" value="Dps_gammaproteobac"/>
</dbReference>
<dbReference type="InterPro" id="IPR012347">
    <property type="entry name" value="Ferritin-like"/>
</dbReference>
<dbReference type="InterPro" id="IPR009078">
    <property type="entry name" value="Ferritin-like_SF"/>
</dbReference>
<dbReference type="InterPro" id="IPR008331">
    <property type="entry name" value="Ferritin_DPS_dom"/>
</dbReference>
<dbReference type="NCBIfam" id="NF006975">
    <property type="entry name" value="PRK09448.1"/>
    <property type="match status" value="1"/>
</dbReference>
<dbReference type="PANTHER" id="PTHR42932:SF3">
    <property type="entry name" value="DNA PROTECTION DURING STARVATION PROTEIN"/>
    <property type="match status" value="1"/>
</dbReference>
<dbReference type="PANTHER" id="PTHR42932">
    <property type="entry name" value="GENERAL STRESS PROTEIN 20U"/>
    <property type="match status" value="1"/>
</dbReference>
<dbReference type="Pfam" id="PF00210">
    <property type="entry name" value="Ferritin"/>
    <property type="match status" value="1"/>
</dbReference>
<dbReference type="PIRSF" id="PIRSF005900">
    <property type="entry name" value="Dps"/>
    <property type="match status" value="1"/>
</dbReference>
<dbReference type="PRINTS" id="PR01346">
    <property type="entry name" value="HELNAPAPROT"/>
</dbReference>
<dbReference type="SUPFAM" id="SSF47240">
    <property type="entry name" value="Ferritin-like"/>
    <property type="match status" value="1"/>
</dbReference>
<dbReference type="PROSITE" id="PS00818">
    <property type="entry name" value="DPS_1"/>
    <property type="match status" value="1"/>
</dbReference>
<feature type="chain" id="PRO_1000068566" description="DNA protection during starvation protein">
    <location>
        <begin position="1"/>
        <end position="167"/>
    </location>
</feature>
<feature type="binding site" evidence="1">
    <location>
        <position position="51"/>
    </location>
    <ligand>
        <name>Fe cation</name>
        <dbReference type="ChEBI" id="CHEBI:24875"/>
    </ligand>
</feature>
<feature type="binding site" evidence="1">
    <location>
        <position position="78"/>
    </location>
    <ligand>
        <name>Fe cation</name>
        <dbReference type="ChEBI" id="CHEBI:24875"/>
    </ligand>
</feature>
<feature type="binding site" evidence="1">
    <location>
        <position position="82"/>
    </location>
    <ligand>
        <name>Fe cation</name>
        <dbReference type="ChEBI" id="CHEBI:24875"/>
    </ligand>
</feature>